<comment type="function">
    <text evidence="1">Catalyzes the hydrolysis of N-succinyl-L,L-diaminopimelic acid (SDAP), forming succinate and LL-2,6-diaminopimelate (DAP), an intermediate involved in the bacterial biosynthesis of lysine and meso-diaminopimelic acid, an essential component of bacterial cell walls.</text>
</comment>
<comment type="catalytic activity">
    <reaction evidence="1">
        <text>N-succinyl-(2S,6S)-2,6-diaminopimelate + H2O = (2S,6S)-2,6-diaminopimelate + succinate</text>
        <dbReference type="Rhea" id="RHEA:22608"/>
        <dbReference type="ChEBI" id="CHEBI:15377"/>
        <dbReference type="ChEBI" id="CHEBI:30031"/>
        <dbReference type="ChEBI" id="CHEBI:57609"/>
        <dbReference type="ChEBI" id="CHEBI:58087"/>
        <dbReference type="EC" id="3.5.1.18"/>
    </reaction>
</comment>
<comment type="cofactor">
    <cofactor evidence="1">
        <name>Zn(2+)</name>
        <dbReference type="ChEBI" id="CHEBI:29105"/>
    </cofactor>
    <cofactor evidence="1">
        <name>Co(2+)</name>
        <dbReference type="ChEBI" id="CHEBI:48828"/>
    </cofactor>
    <text evidence="1">Binds 2 Zn(2+) or Co(2+) ions per subunit.</text>
</comment>
<comment type="pathway">
    <text evidence="1">Amino-acid biosynthesis; L-lysine biosynthesis via DAP pathway; LL-2,6-diaminopimelate from (S)-tetrahydrodipicolinate (succinylase route): step 3/3.</text>
</comment>
<comment type="subunit">
    <text evidence="1">Homodimer.</text>
</comment>
<comment type="similarity">
    <text evidence="1">Belongs to the peptidase M20A family. DapE subfamily.</text>
</comment>
<protein>
    <recommendedName>
        <fullName evidence="1">Succinyl-diaminopimelate desuccinylase</fullName>
        <shortName evidence="1">SDAP desuccinylase</shortName>
        <ecNumber evidence="1">3.5.1.18</ecNumber>
    </recommendedName>
    <alternativeName>
        <fullName evidence="1">N-succinyl-LL-2,6-diaminoheptanedioate amidohydrolase</fullName>
    </alternativeName>
</protein>
<feature type="chain" id="PRO_0000375765" description="Succinyl-diaminopimelate desuccinylase">
    <location>
        <begin position="1"/>
        <end position="376"/>
    </location>
</feature>
<feature type="active site" evidence="1">
    <location>
        <position position="68"/>
    </location>
</feature>
<feature type="active site" description="Proton acceptor" evidence="1">
    <location>
        <position position="133"/>
    </location>
</feature>
<feature type="binding site" evidence="1">
    <location>
        <position position="66"/>
    </location>
    <ligand>
        <name>Zn(2+)</name>
        <dbReference type="ChEBI" id="CHEBI:29105"/>
        <label>1</label>
    </ligand>
</feature>
<feature type="binding site" evidence="1">
    <location>
        <position position="99"/>
    </location>
    <ligand>
        <name>Zn(2+)</name>
        <dbReference type="ChEBI" id="CHEBI:29105"/>
        <label>1</label>
    </ligand>
</feature>
<feature type="binding site" evidence="1">
    <location>
        <position position="99"/>
    </location>
    <ligand>
        <name>Zn(2+)</name>
        <dbReference type="ChEBI" id="CHEBI:29105"/>
        <label>2</label>
    </ligand>
</feature>
<feature type="binding site" evidence="1">
    <location>
        <position position="134"/>
    </location>
    <ligand>
        <name>Zn(2+)</name>
        <dbReference type="ChEBI" id="CHEBI:29105"/>
        <label>2</label>
    </ligand>
</feature>
<feature type="binding site" evidence="1">
    <location>
        <position position="162"/>
    </location>
    <ligand>
        <name>Zn(2+)</name>
        <dbReference type="ChEBI" id="CHEBI:29105"/>
        <label>1</label>
    </ligand>
</feature>
<feature type="binding site" evidence="1">
    <location>
        <position position="349"/>
    </location>
    <ligand>
        <name>Zn(2+)</name>
        <dbReference type="ChEBI" id="CHEBI:29105"/>
        <label>2</label>
    </ligand>
</feature>
<name>DAPE_VESOH</name>
<dbReference type="EC" id="3.5.1.18" evidence="1"/>
<dbReference type="EMBL" id="AP009247">
    <property type="protein sequence ID" value="BAF61389.1"/>
    <property type="molecule type" value="Genomic_DNA"/>
</dbReference>
<dbReference type="RefSeq" id="WP_011929659.1">
    <property type="nucleotide sequence ID" value="NC_009465.1"/>
</dbReference>
<dbReference type="SMR" id="A5CXE9"/>
<dbReference type="STRING" id="412965.COSY_0260"/>
<dbReference type="KEGG" id="vok:COSY_0260"/>
<dbReference type="eggNOG" id="COG0624">
    <property type="taxonomic scope" value="Bacteria"/>
</dbReference>
<dbReference type="HOGENOM" id="CLU_021802_4_0_6"/>
<dbReference type="OrthoDB" id="9809784at2"/>
<dbReference type="UniPathway" id="UPA00034">
    <property type="reaction ID" value="UER00021"/>
</dbReference>
<dbReference type="Proteomes" id="UP000000247">
    <property type="component" value="Chromosome"/>
</dbReference>
<dbReference type="GO" id="GO:0008777">
    <property type="term" value="F:acetylornithine deacetylase activity"/>
    <property type="evidence" value="ECO:0007669"/>
    <property type="project" value="TreeGrafter"/>
</dbReference>
<dbReference type="GO" id="GO:0050897">
    <property type="term" value="F:cobalt ion binding"/>
    <property type="evidence" value="ECO:0007669"/>
    <property type="project" value="UniProtKB-UniRule"/>
</dbReference>
<dbReference type="GO" id="GO:0009014">
    <property type="term" value="F:succinyl-diaminopimelate desuccinylase activity"/>
    <property type="evidence" value="ECO:0007669"/>
    <property type="project" value="UniProtKB-UniRule"/>
</dbReference>
<dbReference type="GO" id="GO:0008270">
    <property type="term" value="F:zinc ion binding"/>
    <property type="evidence" value="ECO:0007669"/>
    <property type="project" value="UniProtKB-UniRule"/>
</dbReference>
<dbReference type="GO" id="GO:0019877">
    <property type="term" value="P:diaminopimelate biosynthetic process"/>
    <property type="evidence" value="ECO:0007669"/>
    <property type="project" value="UniProtKB-UniRule"/>
</dbReference>
<dbReference type="GO" id="GO:0006526">
    <property type="term" value="P:L-arginine biosynthetic process"/>
    <property type="evidence" value="ECO:0007669"/>
    <property type="project" value="TreeGrafter"/>
</dbReference>
<dbReference type="GO" id="GO:0009089">
    <property type="term" value="P:lysine biosynthetic process via diaminopimelate"/>
    <property type="evidence" value="ECO:0007669"/>
    <property type="project" value="UniProtKB-UniRule"/>
</dbReference>
<dbReference type="CDD" id="cd03891">
    <property type="entry name" value="M20_DapE_proteobac"/>
    <property type="match status" value="1"/>
</dbReference>
<dbReference type="FunFam" id="3.30.70.360:FF:000011">
    <property type="entry name" value="Succinyl-diaminopimelate desuccinylase"/>
    <property type="match status" value="1"/>
</dbReference>
<dbReference type="FunFam" id="3.40.630.10:FF:000005">
    <property type="entry name" value="Succinyl-diaminopimelate desuccinylase"/>
    <property type="match status" value="1"/>
</dbReference>
<dbReference type="Gene3D" id="3.40.630.10">
    <property type="entry name" value="Zn peptidases"/>
    <property type="match status" value="2"/>
</dbReference>
<dbReference type="HAMAP" id="MF_01690">
    <property type="entry name" value="DapE"/>
    <property type="match status" value="1"/>
</dbReference>
<dbReference type="InterPro" id="IPR036264">
    <property type="entry name" value="Bact_exopeptidase_dim_dom"/>
</dbReference>
<dbReference type="InterPro" id="IPR005941">
    <property type="entry name" value="DapE_proteobac"/>
</dbReference>
<dbReference type="InterPro" id="IPR002933">
    <property type="entry name" value="Peptidase_M20"/>
</dbReference>
<dbReference type="InterPro" id="IPR011650">
    <property type="entry name" value="Peptidase_M20_dimer"/>
</dbReference>
<dbReference type="InterPro" id="IPR050072">
    <property type="entry name" value="Peptidase_M20A"/>
</dbReference>
<dbReference type="NCBIfam" id="TIGR01246">
    <property type="entry name" value="dapE_proteo"/>
    <property type="match status" value="1"/>
</dbReference>
<dbReference type="NCBIfam" id="NF009557">
    <property type="entry name" value="PRK13009.1"/>
    <property type="match status" value="1"/>
</dbReference>
<dbReference type="PANTHER" id="PTHR43808">
    <property type="entry name" value="ACETYLORNITHINE DEACETYLASE"/>
    <property type="match status" value="1"/>
</dbReference>
<dbReference type="PANTHER" id="PTHR43808:SF31">
    <property type="entry name" value="N-ACETYL-L-CITRULLINE DEACETYLASE"/>
    <property type="match status" value="1"/>
</dbReference>
<dbReference type="Pfam" id="PF07687">
    <property type="entry name" value="M20_dimer"/>
    <property type="match status" value="1"/>
</dbReference>
<dbReference type="Pfam" id="PF01546">
    <property type="entry name" value="Peptidase_M20"/>
    <property type="match status" value="1"/>
</dbReference>
<dbReference type="SUPFAM" id="SSF55031">
    <property type="entry name" value="Bacterial exopeptidase dimerisation domain"/>
    <property type="match status" value="1"/>
</dbReference>
<dbReference type="SUPFAM" id="SSF53187">
    <property type="entry name" value="Zn-dependent exopeptidases"/>
    <property type="match status" value="1"/>
</dbReference>
<organism>
    <name type="scientific">Vesicomyosocius okutanii subsp. Calyptogena okutanii (strain HA)</name>
    <dbReference type="NCBI Taxonomy" id="412965"/>
    <lineage>
        <taxon>Bacteria</taxon>
        <taxon>Pseudomonadati</taxon>
        <taxon>Pseudomonadota</taxon>
        <taxon>Gammaproteobacteria</taxon>
        <taxon>Candidatus Pseudothioglobaceae</taxon>
        <taxon>Candidatus Vesicomyosocius</taxon>
    </lineage>
</organism>
<accession>A5CXE9</accession>
<gene>
    <name evidence="1" type="primary">dapE</name>
    <name type="ordered locus">COSY_0260</name>
</gene>
<sequence>MSKTLTLAKKLVSIDSITPQDKGCQSIMISHLNDLNFEITDLKFGEVDNFWAIRGQQSPVFVFAGHTDVVPVGNESEWHMPPFSAQVKNGMLYGRGTSDMKGSLAAMLSATDRFVKDHSNHKGSIGYLITSDEEGPAINGTVKVAQYLKKINQTVDYCLVGEPSATHELGDIIKNGRRGSLNGSFKIIGKQGHIAYPHLASNPIHLVIPALNDLCNEVWDEGNEYFPATSFQISNIQSGTGVTNVIPGESNIVFNFRYSTQCTQEQLQSRVCAILDKRNFEYQITWEHSGYPFLTPKGKLVNACVNAIKTVKNINTQLSTSGGTSDGRFIAPILKTRVIELGPSNATIHQVNECVSIQDLEDLSDIYYHILKNILT</sequence>
<proteinExistence type="inferred from homology"/>
<reference key="1">
    <citation type="journal article" date="2007" name="Curr. Biol.">
        <title>Reduced genome of the thioautotrophic intracellular symbiont in a deep-sea clam, Calyptogena okutanii.</title>
        <authorList>
            <person name="Kuwahara H."/>
            <person name="Yoshida T."/>
            <person name="Takaki Y."/>
            <person name="Shimamura S."/>
            <person name="Nishi S."/>
            <person name="Harada M."/>
            <person name="Matsuyama K."/>
            <person name="Takishita K."/>
            <person name="Kawato M."/>
            <person name="Uematsu K."/>
            <person name="Fujiwara Y."/>
            <person name="Sato T."/>
            <person name="Kato C."/>
            <person name="Kitagawa M."/>
            <person name="Kato I."/>
            <person name="Maruyama T."/>
        </authorList>
    </citation>
    <scope>NUCLEOTIDE SEQUENCE [LARGE SCALE GENOMIC DNA]</scope>
    <source>
        <strain>HA</strain>
    </source>
</reference>
<keyword id="KW-0028">Amino-acid biosynthesis</keyword>
<keyword id="KW-0170">Cobalt</keyword>
<keyword id="KW-0220">Diaminopimelate biosynthesis</keyword>
<keyword id="KW-0378">Hydrolase</keyword>
<keyword id="KW-0457">Lysine biosynthesis</keyword>
<keyword id="KW-0479">Metal-binding</keyword>
<keyword id="KW-1185">Reference proteome</keyword>
<keyword id="KW-0862">Zinc</keyword>
<evidence type="ECO:0000255" key="1">
    <source>
        <dbReference type="HAMAP-Rule" id="MF_01690"/>
    </source>
</evidence>